<proteinExistence type="inferred from homology"/>
<feature type="chain" id="PRO_0000316805" description="Leucine efflux protein">
    <location>
        <begin position="1"/>
        <end position="212"/>
    </location>
</feature>
<feature type="transmembrane region" description="Helical" evidence="2">
    <location>
        <begin position="5"/>
        <end position="25"/>
    </location>
</feature>
<feature type="transmembrane region" description="Helical" evidence="2">
    <location>
        <begin position="49"/>
        <end position="69"/>
    </location>
</feature>
<feature type="transmembrane region" description="Helical" evidence="2">
    <location>
        <begin position="81"/>
        <end position="101"/>
    </location>
</feature>
<feature type="transmembrane region" description="Helical" evidence="2">
    <location>
        <begin position="122"/>
        <end position="142"/>
    </location>
</feature>
<feature type="transmembrane region" description="Helical" evidence="2">
    <location>
        <begin position="153"/>
        <end position="173"/>
    </location>
</feature>
<feature type="transmembrane region" description="Helical" evidence="2">
    <location>
        <begin position="188"/>
        <end position="208"/>
    </location>
</feature>
<keyword id="KW-0029">Amino-acid transport</keyword>
<keyword id="KW-0050">Antiport</keyword>
<keyword id="KW-0997">Cell inner membrane</keyword>
<keyword id="KW-1003">Cell membrane</keyword>
<keyword id="KW-0472">Membrane</keyword>
<keyword id="KW-0812">Transmembrane</keyword>
<keyword id="KW-1133">Transmembrane helix</keyword>
<keyword id="KW-0813">Transport</keyword>
<evidence type="ECO:0000250" key="1">
    <source>
        <dbReference type="UniProtKB" id="P76249"/>
    </source>
</evidence>
<evidence type="ECO:0000255" key="2"/>
<evidence type="ECO:0000305" key="3"/>
<sequence length="212" mass="22950">MFAEFGVLNYLTYLVGAVFIILVPGPNTFFVLKTGIAHGVKKGYLAAAGVFIGDAVLMFLAFAGVATLIKTTPVLFNVVRYLGAIYLLWLGGKMLYAVLTQRDGQSDASAEPASAILKRSLTLSLTNPKAILFYVSFFVQFIDVNAKTPGVAFFILALTLEVISFCYMSFLILSGSFVTRYVKTRKKLAKLGNSLIGLVFVGFAARLATLQS</sequence>
<reference key="1">
    <citation type="submission" date="2006-09" db="EMBL/GenBank/DDBJ databases">
        <authorList>
            <consortium name="The Klebsiella pneumonia Genome Sequencing Project"/>
            <person name="McClelland M."/>
            <person name="Sanderson E.K."/>
            <person name="Spieth J."/>
            <person name="Clifton W.S."/>
            <person name="Latreille P."/>
            <person name="Sabo A."/>
            <person name="Pepin K."/>
            <person name="Bhonagiri V."/>
            <person name="Porwollik S."/>
            <person name="Ali J."/>
            <person name="Wilson R.K."/>
        </authorList>
    </citation>
    <scope>NUCLEOTIDE SEQUENCE [LARGE SCALE GENOMIC DNA]</scope>
    <source>
        <strain>ATCC 700721 / MGH 78578</strain>
    </source>
</reference>
<protein>
    <recommendedName>
        <fullName evidence="1">Leucine efflux protein</fullName>
    </recommendedName>
</protein>
<organism>
    <name type="scientific">Klebsiella pneumoniae subsp. pneumoniae (strain ATCC 700721 / MGH 78578)</name>
    <dbReference type="NCBI Taxonomy" id="272620"/>
    <lineage>
        <taxon>Bacteria</taxon>
        <taxon>Pseudomonadati</taxon>
        <taxon>Pseudomonadota</taxon>
        <taxon>Gammaproteobacteria</taxon>
        <taxon>Enterobacterales</taxon>
        <taxon>Enterobacteriaceae</taxon>
        <taxon>Klebsiella/Raoultella group</taxon>
        <taxon>Klebsiella</taxon>
        <taxon>Klebsiella pneumoniae complex</taxon>
    </lineage>
</organism>
<comment type="function">
    <text evidence="1">Exporter of leucine.</text>
</comment>
<comment type="catalytic activity">
    <reaction evidence="1">
        <text>L-leucine(in) + H(+)(out) = L-leucine(out) + H(+)(in)</text>
        <dbReference type="Rhea" id="RHEA:28731"/>
        <dbReference type="ChEBI" id="CHEBI:15378"/>
        <dbReference type="ChEBI" id="CHEBI:57427"/>
    </reaction>
    <physiologicalReaction direction="left-to-right" evidence="1">
        <dbReference type="Rhea" id="RHEA:28732"/>
    </physiologicalReaction>
</comment>
<comment type="subcellular location">
    <subcellularLocation>
        <location evidence="1">Cell inner membrane</location>
        <topology evidence="2">Multi-pass membrane protein</topology>
    </subcellularLocation>
</comment>
<comment type="similarity">
    <text evidence="3">Belongs to the Rht family.</text>
</comment>
<name>LEUE_KLEP7</name>
<accession>A6T7N0</accession>
<gene>
    <name type="primary">leuE</name>
    <name type="ordered locus">KPN78578_11400</name>
    <name type="ORF">KPN_01168</name>
</gene>
<dbReference type="EMBL" id="CP000647">
    <property type="protein sequence ID" value="ABR76601.1"/>
    <property type="molecule type" value="Genomic_DNA"/>
</dbReference>
<dbReference type="RefSeq" id="WP_004150783.1">
    <property type="nucleotide sequence ID" value="NC_009648.1"/>
</dbReference>
<dbReference type="STRING" id="272620.KPN_01168"/>
<dbReference type="PaxDb" id="272620-KPN_01168"/>
<dbReference type="EnsemblBacteria" id="ABR76601">
    <property type="protein sequence ID" value="ABR76601"/>
    <property type="gene ID" value="KPN_01168"/>
</dbReference>
<dbReference type="KEGG" id="kpn:KPN_01168"/>
<dbReference type="HOGENOM" id="CLU_079569_3_1_6"/>
<dbReference type="Proteomes" id="UP000000265">
    <property type="component" value="Chromosome"/>
</dbReference>
<dbReference type="GO" id="GO:0005886">
    <property type="term" value="C:plasma membrane"/>
    <property type="evidence" value="ECO:0007669"/>
    <property type="project" value="UniProtKB-SubCell"/>
</dbReference>
<dbReference type="GO" id="GO:0015297">
    <property type="term" value="F:antiporter activity"/>
    <property type="evidence" value="ECO:0007669"/>
    <property type="project" value="UniProtKB-KW"/>
</dbReference>
<dbReference type="GO" id="GO:0015190">
    <property type="term" value="F:L-leucine transmembrane transporter activity"/>
    <property type="evidence" value="ECO:0007669"/>
    <property type="project" value="TreeGrafter"/>
</dbReference>
<dbReference type="GO" id="GO:0015820">
    <property type="term" value="P:L-leucine transport"/>
    <property type="evidence" value="ECO:0007669"/>
    <property type="project" value="TreeGrafter"/>
</dbReference>
<dbReference type="InterPro" id="IPR001123">
    <property type="entry name" value="LeuE-type"/>
</dbReference>
<dbReference type="NCBIfam" id="NF008201">
    <property type="entry name" value="PRK10958.1"/>
    <property type="match status" value="1"/>
</dbReference>
<dbReference type="PANTHER" id="PTHR30086">
    <property type="entry name" value="ARGININE EXPORTER PROTEIN ARGO"/>
    <property type="match status" value="1"/>
</dbReference>
<dbReference type="PANTHER" id="PTHR30086:SF15">
    <property type="entry name" value="LEUCINE EFFLUX PROTEIN"/>
    <property type="match status" value="1"/>
</dbReference>
<dbReference type="Pfam" id="PF01810">
    <property type="entry name" value="LysE"/>
    <property type="match status" value="1"/>
</dbReference>
<dbReference type="PIRSF" id="PIRSF006324">
    <property type="entry name" value="LeuE"/>
    <property type="match status" value="1"/>
</dbReference>